<feature type="chain" id="PRO_0000440357" description="Homoserine O-succinyltransferase">
    <location>
        <begin position="1"/>
        <end position="315"/>
    </location>
</feature>
<feature type="region of interest" description="Disordered" evidence="2">
    <location>
        <begin position="249"/>
        <end position="271"/>
    </location>
</feature>
<feature type="compositionally biased region" description="Basic and acidic residues" evidence="2">
    <location>
        <begin position="249"/>
        <end position="258"/>
    </location>
</feature>
<feature type="active site" description="Acyl-thioester intermediate" evidence="1">
    <location>
        <position position="142"/>
    </location>
</feature>
<feature type="active site" description="Proton acceptor" evidence="1">
    <location>
        <position position="235"/>
    </location>
</feature>
<feature type="active site" evidence="1">
    <location>
        <position position="237"/>
    </location>
</feature>
<feature type="binding site" evidence="1">
    <location>
        <position position="163"/>
    </location>
    <ligand>
        <name>substrate</name>
    </ligand>
</feature>
<feature type="binding site" evidence="1">
    <location>
        <position position="192"/>
    </location>
    <ligand>
        <name>substrate</name>
    </ligand>
</feature>
<feature type="binding site" evidence="1">
    <location>
        <position position="249"/>
    </location>
    <ligand>
        <name>substrate</name>
    </ligand>
</feature>
<feature type="site" description="Important for acyl-CoA specificity" evidence="1">
    <location>
        <position position="111"/>
    </location>
</feature>
<feature type="site" description="Important for substrate specificity" evidence="1">
    <location>
        <position position="192"/>
    </location>
</feature>
<reference key="1">
    <citation type="journal article" date="2005" name="Genome Res.">
        <title>Coping with cold: the genome of the versatile marine Antarctica bacterium Pseudoalteromonas haloplanktis TAC125.</title>
        <authorList>
            <person name="Medigue C."/>
            <person name="Krin E."/>
            <person name="Pascal G."/>
            <person name="Barbe V."/>
            <person name="Bernsel A."/>
            <person name="Bertin P.N."/>
            <person name="Cheung F."/>
            <person name="Cruveiller S."/>
            <person name="D'Amico S."/>
            <person name="Duilio A."/>
            <person name="Fang G."/>
            <person name="Feller G."/>
            <person name="Ho C."/>
            <person name="Mangenot S."/>
            <person name="Marino G."/>
            <person name="Nilsson J."/>
            <person name="Parrilli E."/>
            <person name="Rocha E.P.C."/>
            <person name="Rouy Z."/>
            <person name="Sekowska A."/>
            <person name="Tutino M.L."/>
            <person name="Vallenet D."/>
            <person name="von Heijne G."/>
            <person name="Danchin A."/>
        </authorList>
    </citation>
    <scope>NUCLEOTIDE SEQUENCE [LARGE SCALE GENOMIC DNA]</scope>
    <source>
        <strain>TAC 125</strain>
    </source>
</reference>
<reference key="2">
    <citation type="journal article" date="2017" name="Nat. Chem. Biol.">
        <title>Parallel evolution of non-homologous isofunctional enzymes in methionine biosynthesis.</title>
        <authorList>
            <person name="Bastard K."/>
            <person name="Perret A."/>
            <person name="Mariage A."/>
            <person name="Bessonnet T."/>
            <person name="Pinet-Turpault A."/>
            <person name="Petit J.L."/>
            <person name="Darii E."/>
            <person name="Bazire P."/>
            <person name="Vergne-Vaxelaire C."/>
            <person name="Brewee C."/>
            <person name="Debard A."/>
            <person name="Pellouin V."/>
            <person name="Besnard-Gonnet M."/>
            <person name="Artiguenave F."/>
            <person name="Medigue C."/>
            <person name="Vallenet D."/>
            <person name="Danchin A."/>
            <person name="Zaparucha A."/>
            <person name="Weissenbach J."/>
            <person name="Salanoubat M."/>
            <person name="de Berardinis V."/>
        </authorList>
    </citation>
    <scope>FUNCTION</scope>
    <scope>CATALYTIC ACTIVITY</scope>
</reference>
<protein>
    <recommendedName>
        <fullName evidence="1">Homoserine O-succinyltransferase</fullName>
        <shortName evidence="1 4">HST</shortName>
        <ecNumber evidence="1 3">2.3.1.46</ecNumber>
    </recommendedName>
    <alternativeName>
        <fullName evidence="1">Homoserine transsuccinylase</fullName>
        <shortName evidence="1">HTS</shortName>
    </alternativeName>
</protein>
<sequence length="315" mass="36369">MPITVKDELPAIARLRQENVFVMPQTRAKTQEIRPMRLAILNLMPNKVETEVQFIRLLANSPLQVNVELLRLDTHRSSSNSEQHLDTFYRYFSEVKNNNYDALIVTGAPLAHLEYQDVAYWDEFTAILDWAEQHVTSTLFSCWAAHAALYHHYKIKRDLKTDKLCGVFTHQCYFEHGALTRGFDDTFLVPHSRYGHVDVNKINACNELVVLAGSEKVGAYLVKNKSGSQVFITGHPEYDADSLKAEYQRDCEKSDNAPKPENYFPDDDATKQPSKTWQSHAFLLFSNWLNYYVYQTTPYDINLVSQDVRTNNYAE</sequence>
<dbReference type="EC" id="2.3.1.46" evidence="1 3"/>
<dbReference type="EMBL" id="CR954246">
    <property type="protein sequence ID" value="CAI87280.1"/>
    <property type="molecule type" value="Genomic_DNA"/>
</dbReference>
<dbReference type="SMR" id="Q3IHM8"/>
<dbReference type="STRING" id="326442.PSHAa2224"/>
<dbReference type="KEGG" id="pha:PSHAa2224"/>
<dbReference type="PATRIC" id="fig|326442.8.peg.2145"/>
<dbReference type="eggNOG" id="COG1897">
    <property type="taxonomic scope" value="Bacteria"/>
</dbReference>
<dbReference type="HOGENOM" id="CLU_057851_0_1_6"/>
<dbReference type="BioCyc" id="PHAL326442:PSHA_RS10975-MONOMER"/>
<dbReference type="UniPathway" id="UPA00051">
    <property type="reaction ID" value="UER00075"/>
</dbReference>
<dbReference type="Proteomes" id="UP000006843">
    <property type="component" value="Chromosome I"/>
</dbReference>
<dbReference type="GO" id="GO:0005737">
    <property type="term" value="C:cytoplasm"/>
    <property type="evidence" value="ECO:0007669"/>
    <property type="project" value="UniProtKB-SubCell"/>
</dbReference>
<dbReference type="GO" id="GO:0004414">
    <property type="term" value="F:homoserine O-acetyltransferase activity"/>
    <property type="evidence" value="ECO:0007669"/>
    <property type="project" value="UniProtKB-UniRule"/>
</dbReference>
<dbReference type="GO" id="GO:0008899">
    <property type="term" value="F:homoserine O-succinyltransferase activity"/>
    <property type="evidence" value="ECO:0007669"/>
    <property type="project" value="UniProtKB-EC"/>
</dbReference>
<dbReference type="GO" id="GO:0019281">
    <property type="term" value="P:L-methionine biosynthetic process from homoserine via O-succinyl-L-homoserine and cystathionine"/>
    <property type="evidence" value="ECO:0007669"/>
    <property type="project" value="InterPro"/>
</dbReference>
<dbReference type="CDD" id="cd03131">
    <property type="entry name" value="GATase1_HTS"/>
    <property type="match status" value="1"/>
</dbReference>
<dbReference type="FunFam" id="3.40.50.880:FF:000004">
    <property type="entry name" value="Homoserine O-succinyltransferase"/>
    <property type="match status" value="1"/>
</dbReference>
<dbReference type="Gene3D" id="3.40.50.880">
    <property type="match status" value="1"/>
</dbReference>
<dbReference type="HAMAP" id="MF_00295">
    <property type="entry name" value="MetA_acyltransf"/>
    <property type="match status" value="1"/>
</dbReference>
<dbReference type="InterPro" id="IPR029062">
    <property type="entry name" value="Class_I_gatase-like"/>
</dbReference>
<dbReference type="InterPro" id="IPR005697">
    <property type="entry name" value="HST_MetA"/>
</dbReference>
<dbReference type="InterPro" id="IPR033752">
    <property type="entry name" value="MetA_family"/>
</dbReference>
<dbReference type="NCBIfam" id="TIGR01001">
    <property type="entry name" value="metA"/>
    <property type="match status" value="1"/>
</dbReference>
<dbReference type="PANTHER" id="PTHR20919">
    <property type="entry name" value="HOMOSERINE O-SUCCINYLTRANSFERASE"/>
    <property type="match status" value="1"/>
</dbReference>
<dbReference type="PANTHER" id="PTHR20919:SF0">
    <property type="entry name" value="HOMOSERINE O-SUCCINYLTRANSFERASE"/>
    <property type="match status" value="1"/>
</dbReference>
<dbReference type="Pfam" id="PF04204">
    <property type="entry name" value="HTS"/>
    <property type="match status" value="1"/>
</dbReference>
<dbReference type="PIRSF" id="PIRSF000450">
    <property type="entry name" value="H_ser_succinyltr"/>
    <property type="match status" value="1"/>
</dbReference>
<dbReference type="SUPFAM" id="SSF52317">
    <property type="entry name" value="Class I glutamine amidotransferase-like"/>
    <property type="match status" value="1"/>
</dbReference>
<name>METAS_PSET1</name>
<organism>
    <name type="scientific">Pseudoalteromonas translucida (strain TAC 125)</name>
    <dbReference type="NCBI Taxonomy" id="326442"/>
    <lineage>
        <taxon>Bacteria</taxon>
        <taxon>Pseudomonadati</taxon>
        <taxon>Pseudomonadota</taxon>
        <taxon>Gammaproteobacteria</taxon>
        <taxon>Alteromonadales</taxon>
        <taxon>Pseudoalteromonadaceae</taxon>
        <taxon>Pseudoalteromonas</taxon>
    </lineage>
</organism>
<proteinExistence type="evidence at protein level"/>
<keyword id="KW-0012">Acyltransferase</keyword>
<keyword id="KW-0028">Amino-acid biosynthesis</keyword>
<keyword id="KW-0963">Cytoplasm</keyword>
<keyword id="KW-0486">Methionine biosynthesis</keyword>
<keyword id="KW-1185">Reference proteome</keyword>
<keyword id="KW-0808">Transferase</keyword>
<accession>Q3IHM8</accession>
<evidence type="ECO:0000255" key="1">
    <source>
        <dbReference type="HAMAP-Rule" id="MF_00295"/>
    </source>
</evidence>
<evidence type="ECO:0000256" key="2">
    <source>
        <dbReference type="SAM" id="MobiDB-lite"/>
    </source>
</evidence>
<evidence type="ECO:0000269" key="3">
    <source>
    </source>
</evidence>
<evidence type="ECO:0000303" key="4">
    <source>
    </source>
</evidence>
<evidence type="ECO:0000312" key="5">
    <source>
        <dbReference type="EMBL" id="CAI87280.1"/>
    </source>
</evidence>
<gene>
    <name evidence="1 4" type="primary">metAS</name>
    <name evidence="5" type="ordered locus">PSHAa2224</name>
</gene>
<comment type="function">
    <text evidence="1 3">Transfers a succinyl group from succinyl-CoA to L-homoserine, forming succinyl-L-homoserine.</text>
</comment>
<comment type="catalytic activity">
    <reaction evidence="1 3">
        <text>L-homoserine + succinyl-CoA = O-succinyl-L-homoserine + CoA</text>
        <dbReference type="Rhea" id="RHEA:22008"/>
        <dbReference type="ChEBI" id="CHEBI:57287"/>
        <dbReference type="ChEBI" id="CHEBI:57292"/>
        <dbReference type="ChEBI" id="CHEBI:57476"/>
        <dbReference type="ChEBI" id="CHEBI:57661"/>
        <dbReference type="EC" id="2.3.1.46"/>
    </reaction>
</comment>
<comment type="pathway">
    <text evidence="1">Amino-acid biosynthesis; L-methionine biosynthesis via de novo pathway; O-succinyl-L-homoserine from L-homoserine: step 1/1.</text>
</comment>
<comment type="subcellular location">
    <subcellularLocation>
        <location evidence="1">Cytoplasm</location>
    </subcellularLocation>
</comment>
<comment type="similarity">
    <text evidence="1">Belongs to the MetA family.</text>
</comment>